<feature type="chain" id="PRO_0000341886" description="2-succinyl-5-enolpyruvyl-6-hydroxy-3-cyclohexene-1-carboxylate synthase">
    <location>
        <begin position="1"/>
        <end position="571"/>
    </location>
</feature>
<comment type="function">
    <text evidence="1">Catalyzes the thiamine diphosphate-dependent decarboxylation of 2-oxoglutarate and the subsequent addition of the resulting succinic semialdehyde-thiamine pyrophosphate anion to isochorismate to yield 2-succinyl-5-enolpyruvyl-6-hydroxy-3-cyclohexene-1-carboxylate (SEPHCHC).</text>
</comment>
<comment type="catalytic activity">
    <reaction evidence="1">
        <text>isochorismate + 2-oxoglutarate + H(+) = 5-enolpyruvoyl-6-hydroxy-2-succinyl-cyclohex-3-ene-1-carboxylate + CO2</text>
        <dbReference type="Rhea" id="RHEA:25593"/>
        <dbReference type="ChEBI" id="CHEBI:15378"/>
        <dbReference type="ChEBI" id="CHEBI:16526"/>
        <dbReference type="ChEBI" id="CHEBI:16810"/>
        <dbReference type="ChEBI" id="CHEBI:29780"/>
        <dbReference type="ChEBI" id="CHEBI:58818"/>
        <dbReference type="EC" id="2.2.1.9"/>
    </reaction>
</comment>
<comment type="cofactor">
    <cofactor evidence="1">
        <name>Mg(2+)</name>
        <dbReference type="ChEBI" id="CHEBI:18420"/>
    </cofactor>
    <cofactor evidence="1">
        <name>Mn(2+)</name>
        <dbReference type="ChEBI" id="CHEBI:29035"/>
    </cofactor>
</comment>
<comment type="cofactor">
    <cofactor evidence="1">
        <name>thiamine diphosphate</name>
        <dbReference type="ChEBI" id="CHEBI:58937"/>
    </cofactor>
    <text evidence="1">Binds 1 thiamine pyrophosphate per subunit.</text>
</comment>
<comment type="pathway">
    <text evidence="1">Quinol/quinone metabolism; 1,4-dihydroxy-2-naphthoate biosynthesis; 1,4-dihydroxy-2-naphthoate from chorismate: step 2/7.</text>
</comment>
<comment type="pathway">
    <text evidence="1">Quinol/quinone metabolism; menaquinone biosynthesis.</text>
</comment>
<comment type="subunit">
    <text evidence="1">Homodimer.</text>
</comment>
<comment type="similarity">
    <text evidence="1">Belongs to the TPP enzyme family. MenD subfamily.</text>
</comment>
<dbReference type="EC" id="2.2.1.9" evidence="1"/>
<dbReference type="EMBL" id="BA000031">
    <property type="protein sequence ID" value="BAC59192.1"/>
    <property type="molecule type" value="Genomic_DNA"/>
</dbReference>
<dbReference type="RefSeq" id="NP_797308.1">
    <property type="nucleotide sequence ID" value="NC_004603.1"/>
</dbReference>
<dbReference type="RefSeq" id="WP_005482534.1">
    <property type="nucleotide sequence ID" value="NC_004603.1"/>
</dbReference>
<dbReference type="SMR" id="Q87R69"/>
<dbReference type="DNASU" id="1188427"/>
<dbReference type="GeneID" id="1188427"/>
<dbReference type="KEGG" id="vpa:VP0929"/>
<dbReference type="PATRIC" id="fig|223926.6.peg.881"/>
<dbReference type="eggNOG" id="COG1165">
    <property type="taxonomic scope" value="Bacteria"/>
</dbReference>
<dbReference type="HOGENOM" id="CLU_006051_3_0_6"/>
<dbReference type="UniPathway" id="UPA00079"/>
<dbReference type="UniPathway" id="UPA01057">
    <property type="reaction ID" value="UER00164"/>
</dbReference>
<dbReference type="Proteomes" id="UP000002493">
    <property type="component" value="Chromosome 1"/>
</dbReference>
<dbReference type="GO" id="GO:0070204">
    <property type="term" value="F:2-succinyl-5-enolpyruvyl-6-hydroxy-3-cyclohexene-1-carboxylic-acid synthase activity"/>
    <property type="evidence" value="ECO:0007669"/>
    <property type="project" value="UniProtKB-UniRule"/>
</dbReference>
<dbReference type="GO" id="GO:0000287">
    <property type="term" value="F:magnesium ion binding"/>
    <property type="evidence" value="ECO:0007669"/>
    <property type="project" value="UniProtKB-UniRule"/>
</dbReference>
<dbReference type="GO" id="GO:0030145">
    <property type="term" value="F:manganese ion binding"/>
    <property type="evidence" value="ECO:0007669"/>
    <property type="project" value="UniProtKB-UniRule"/>
</dbReference>
<dbReference type="GO" id="GO:0030976">
    <property type="term" value="F:thiamine pyrophosphate binding"/>
    <property type="evidence" value="ECO:0007669"/>
    <property type="project" value="UniProtKB-UniRule"/>
</dbReference>
<dbReference type="GO" id="GO:0009234">
    <property type="term" value="P:menaquinone biosynthetic process"/>
    <property type="evidence" value="ECO:0007669"/>
    <property type="project" value="UniProtKB-UniRule"/>
</dbReference>
<dbReference type="CDD" id="cd07037">
    <property type="entry name" value="TPP_PYR_MenD"/>
    <property type="match status" value="1"/>
</dbReference>
<dbReference type="CDD" id="cd02009">
    <property type="entry name" value="TPP_SHCHC_synthase"/>
    <property type="match status" value="1"/>
</dbReference>
<dbReference type="Gene3D" id="3.40.50.970">
    <property type="match status" value="2"/>
</dbReference>
<dbReference type="Gene3D" id="3.40.50.1220">
    <property type="entry name" value="TPP-binding domain"/>
    <property type="match status" value="1"/>
</dbReference>
<dbReference type="HAMAP" id="MF_01659">
    <property type="entry name" value="MenD"/>
    <property type="match status" value="1"/>
</dbReference>
<dbReference type="InterPro" id="IPR029035">
    <property type="entry name" value="DHS-like_NAD/FAD-binding_dom"/>
</dbReference>
<dbReference type="InterPro" id="IPR004433">
    <property type="entry name" value="MenaQ_synth_MenD"/>
</dbReference>
<dbReference type="InterPro" id="IPR032264">
    <property type="entry name" value="MenD_middle"/>
</dbReference>
<dbReference type="InterPro" id="IPR029061">
    <property type="entry name" value="THDP-binding"/>
</dbReference>
<dbReference type="InterPro" id="IPR012001">
    <property type="entry name" value="Thiamin_PyroP_enz_TPP-bd_dom"/>
</dbReference>
<dbReference type="InterPro" id="IPR011766">
    <property type="entry name" value="TPP_enzyme_TPP-bd"/>
</dbReference>
<dbReference type="NCBIfam" id="TIGR00173">
    <property type="entry name" value="menD"/>
    <property type="match status" value="1"/>
</dbReference>
<dbReference type="PANTHER" id="PTHR42916">
    <property type="entry name" value="2-SUCCINYL-5-ENOLPYRUVYL-6-HYDROXY-3-CYCLOHEXENE-1-CARBOXYLATE SYNTHASE"/>
    <property type="match status" value="1"/>
</dbReference>
<dbReference type="PANTHER" id="PTHR42916:SF1">
    <property type="entry name" value="PROTEIN PHYLLO, CHLOROPLASTIC"/>
    <property type="match status" value="1"/>
</dbReference>
<dbReference type="Pfam" id="PF02775">
    <property type="entry name" value="TPP_enzyme_C"/>
    <property type="match status" value="1"/>
</dbReference>
<dbReference type="Pfam" id="PF16582">
    <property type="entry name" value="TPP_enzyme_M_2"/>
    <property type="match status" value="1"/>
</dbReference>
<dbReference type="Pfam" id="PF02776">
    <property type="entry name" value="TPP_enzyme_N"/>
    <property type="match status" value="1"/>
</dbReference>
<dbReference type="PIRSF" id="PIRSF004983">
    <property type="entry name" value="MenD"/>
    <property type="match status" value="1"/>
</dbReference>
<dbReference type="SUPFAM" id="SSF52467">
    <property type="entry name" value="DHS-like NAD/FAD-binding domain"/>
    <property type="match status" value="1"/>
</dbReference>
<dbReference type="SUPFAM" id="SSF52518">
    <property type="entry name" value="Thiamin diphosphate-binding fold (THDP-binding)"/>
    <property type="match status" value="2"/>
</dbReference>
<name>MEND_VIBPA</name>
<reference key="1">
    <citation type="journal article" date="2003" name="Lancet">
        <title>Genome sequence of Vibrio parahaemolyticus: a pathogenic mechanism distinct from that of V. cholerae.</title>
        <authorList>
            <person name="Makino K."/>
            <person name="Oshima K."/>
            <person name="Kurokawa K."/>
            <person name="Yokoyama K."/>
            <person name="Uda T."/>
            <person name="Tagomori K."/>
            <person name="Iijima Y."/>
            <person name="Najima M."/>
            <person name="Nakano M."/>
            <person name="Yamashita A."/>
            <person name="Kubota Y."/>
            <person name="Kimura S."/>
            <person name="Yasunaga T."/>
            <person name="Honda T."/>
            <person name="Shinagawa H."/>
            <person name="Hattori M."/>
            <person name="Iida T."/>
        </authorList>
    </citation>
    <scope>NUCLEOTIDE SEQUENCE [LARGE SCALE GENOMIC DNA]</scope>
    <source>
        <strain>RIMD 2210633</strain>
    </source>
</reference>
<protein>
    <recommendedName>
        <fullName evidence="1">2-succinyl-5-enolpyruvyl-6-hydroxy-3-cyclohexene-1-carboxylate synthase</fullName>
        <shortName evidence="1">SEPHCHC synthase</shortName>
        <ecNumber evidence="1">2.2.1.9</ecNumber>
    </recommendedName>
    <alternativeName>
        <fullName evidence="1">Menaquinone biosynthesis protein MenD</fullName>
    </alternativeName>
</protein>
<keyword id="KW-0460">Magnesium</keyword>
<keyword id="KW-0464">Manganese</keyword>
<keyword id="KW-0474">Menaquinone biosynthesis</keyword>
<keyword id="KW-0479">Metal-binding</keyword>
<keyword id="KW-0786">Thiamine pyrophosphate</keyword>
<keyword id="KW-0808">Transferase</keyword>
<proteinExistence type="inferred from homology"/>
<gene>
    <name evidence="1" type="primary">menD</name>
    <name type="ordered locus">VP0929</name>
</gene>
<organism>
    <name type="scientific">Vibrio parahaemolyticus serotype O3:K6 (strain RIMD 2210633)</name>
    <dbReference type="NCBI Taxonomy" id="223926"/>
    <lineage>
        <taxon>Bacteria</taxon>
        <taxon>Pseudomonadati</taxon>
        <taxon>Pseudomonadota</taxon>
        <taxon>Gammaproteobacteria</taxon>
        <taxon>Vibrionales</taxon>
        <taxon>Vibrionaceae</taxon>
        <taxon>Vibrio</taxon>
    </lineage>
</organism>
<evidence type="ECO:0000255" key="1">
    <source>
        <dbReference type="HAMAP-Rule" id="MF_01659"/>
    </source>
</evidence>
<accession>Q87R69</accession>
<sequence>MSYDQAVLNRIWSETILTELHRFGVKHVCIAPGSRSTPLTLEAAEQPNFSIHTHFDERGLGFMALGLAKASQEPVAVIVTSGTAVANLLPAVAEAKLTGEKLVLLTADRPVELVGCGANQAINQLGIFSQHVSANLNLPSPSLNTPLNWLLTSVDEVMFNQQLHGSAVHINCAFPEPLYSDGEKSAYQSYLSSVEAWRKGGQTYTQRFVSPSFRDIPFCADRKGVVVIGSLSAEHAQEAKAFAQQMGWPVLADPQSGVSSDWSHYDLWLQQPKLASQLDECDLVLQFGSRIISKRLNQWINKQVSQSQQGRDVQYWFISPSLSRDNQTHLPQLHWVASPKSWVERVDVKSSSTQGWADGLLTDIAHVRAHISDEFLFSSASTLNEIALAADIEERTQSVDVFLGNSLFVRLVDMFGRLNTEVFTNRGASGIDGLFATASGVQRSRGKPLLMYIGDTSALYDLNSLALFSRNDLPSVLVVTNNDGGAIFDMLPVPQEHRTAYYQMPHGYQFEHAAKQFGLKYEKPTTLQMYQAMVADHLSSGQGTMLVEVQTPPSQAAELIKAFNKSLHASL</sequence>